<name>HPRT_METM5</name>
<comment type="function">
    <text evidence="1">Catalyzes a salvage reaction resulting in the formation of IMP that is energically less costly than de novo synthesis.</text>
</comment>
<comment type="catalytic activity">
    <reaction evidence="1">
        <text>IMP + diphosphate = hypoxanthine + 5-phospho-alpha-D-ribose 1-diphosphate</text>
        <dbReference type="Rhea" id="RHEA:17973"/>
        <dbReference type="ChEBI" id="CHEBI:17368"/>
        <dbReference type="ChEBI" id="CHEBI:33019"/>
        <dbReference type="ChEBI" id="CHEBI:58017"/>
        <dbReference type="ChEBI" id="CHEBI:58053"/>
        <dbReference type="EC" id="2.4.2.8"/>
    </reaction>
</comment>
<comment type="catalytic activity">
    <reaction evidence="1">
        <text>GMP + diphosphate = guanine + 5-phospho-alpha-D-ribose 1-diphosphate</text>
        <dbReference type="Rhea" id="RHEA:25424"/>
        <dbReference type="ChEBI" id="CHEBI:16235"/>
        <dbReference type="ChEBI" id="CHEBI:33019"/>
        <dbReference type="ChEBI" id="CHEBI:58017"/>
        <dbReference type="ChEBI" id="CHEBI:58115"/>
        <dbReference type="EC" id="2.4.2.8"/>
    </reaction>
</comment>
<comment type="pathway">
    <text evidence="1">Purine metabolism; IMP biosynthesis via salvage pathway; IMP from hypoxanthine: step 1/1.</text>
</comment>
<comment type="subunit">
    <text evidence="1">Homodimer.</text>
</comment>
<comment type="subcellular location">
    <subcellularLocation>
        <location evidence="1">Cytoplasm</location>
    </subcellularLocation>
</comment>
<comment type="similarity">
    <text evidence="1">Belongs to the purine/pyrimidine phosphoribosyltransferase family. Archaeal HPRT subfamily.</text>
</comment>
<reference key="1">
    <citation type="submission" date="2007-03" db="EMBL/GenBank/DDBJ databases">
        <title>Complete sequence of chromosome of Methanococcus maripaludis C5.</title>
        <authorList>
            <consortium name="US DOE Joint Genome Institute"/>
            <person name="Copeland A."/>
            <person name="Lucas S."/>
            <person name="Lapidus A."/>
            <person name="Barry K."/>
            <person name="Glavina del Rio T."/>
            <person name="Dalin E."/>
            <person name="Tice H."/>
            <person name="Pitluck S."/>
            <person name="Chertkov O."/>
            <person name="Brettin T."/>
            <person name="Bruce D."/>
            <person name="Han C."/>
            <person name="Detter J.C."/>
            <person name="Schmutz J."/>
            <person name="Larimer F."/>
            <person name="Land M."/>
            <person name="Hauser L."/>
            <person name="Kyrpides N."/>
            <person name="Mikhailova N."/>
            <person name="Sieprawska-Lupa M."/>
            <person name="Whitman W.B."/>
            <person name="Richardson P."/>
        </authorList>
    </citation>
    <scope>NUCLEOTIDE SEQUENCE [LARGE SCALE GENOMIC DNA]</scope>
    <source>
        <strain>C5 / ATCC BAA-1333</strain>
    </source>
</reference>
<accession>A4G043</accession>
<evidence type="ECO:0000255" key="1">
    <source>
        <dbReference type="HAMAP-Rule" id="MF_01467"/>
    </source>
</evidence>
<protein>
    <recommendedName>
        <fullName evidence="1">Hypoxanthine/guanine phosphoribosyltransferase</fullName>
        <shortName evidence="1">HGPRTase</shortName>
        <ecNumber evidence="1">2.4.2.8</ecNumber>
    </recommendedName>
</protein>
<gene>
    <name evidence="1" type="primary">hpt</name>
    <name type="ordered locus">MmarC5_1530</name>
</gene>
<sequence length="185" mass="20485">MSRLLEESLKTCPIVKRGEYHYFIHPISDGVPLVEPELLRDISTRVIKMIDTEVDKIVTAEAMGIPIVTAVSIATDIPYVIMRKREYLLEGEIPVHQETGYSKGELYLNGINKGDKVVILDDVISTGGTLVAIINALKRAGADIRDVLCIIDRGNGQNIVEEKTGYKVKTLVKIEVVDGKVQILK</sequence>
<proteinExistence type="inferred from homology"/>
<keyword id="KW-0963">Cytoplasm</keyword>
<keyword id="KW-0328">Glycosyltransferase</keyword>
<keyword id="KW-0660">Purine salvage</keyword>
<keyword id="KW-0808">Transferase</keyword>
<organism>
    <name type="scientific">Methanococcus maripaludis (strain C5 / ATCC BAA-1333)</name>
    <dbReference type="NCBI Taxonomy" id="402880"/>
    <lineage>
        <taxon>Archaea</taxon>
        <taxon>Methanobacteriati</taxon>
        <taxon>Methanobacteriota</taxon>
        <taxon>Methanomada group</taxon>
        <taxon>Methanococci</taxon>
        <taxon>Methanococcales</taxon>
        <taxon>Methanococcaceae</taxon>
        <taxon>Methanococcus</taxon>
    </lineage>
</organism>
<feature type="chain" id="PRO_0000329374" description="Hypoxanthine/guanine phosphoribosyltransferase">
    <location>
        <begin position="1"/>
        <end position="185"/>
    </location>
</feature>
<dbReference type="EC" id="2.4.2.8" evidence="1"/>
<dbReference type="EMBL" id="CP000609">
    <property type="protein sequence ID" value="ABO35827.1"/>
    <property type="molecule type" value="Genomic_DNA"/>
</dbReference>
<dbReference type="RefSeq" id="WP_011869274.1">
    <property type="nucleotide sequence ID" value="NC_009135.1"/>
</dbReference>
<dbReference type="SMR" id="A4G043"/>
<dbReference type="STRING" id="402880.MmarC5_1530"/>
<dbReference type="GeneID" id="4928894"/>
<dbReference type="KEGG" id="mmq:MmarC5_1530"/>
<dbReference type="eggNOG" id="arCOG00030">
    <property type="taxonomic scope" value="Archaea"/>
</dbReference>
<dbReference type="HOGENOM" id="CLU_126376_0_0_2"/>
<dbReference type="OrthoDB" id="8323at2157"/>
<dbReference type="UniPathway" id="UPA00591">
    <property type="reaction ID" value="UER00648"/>
</dbReference>
<dbReference type="Proteomes" id="UP000000253">
    <property type="component" value="Chromosome"/>
</dbReference>
<dbReference type="GO" id="GO:0005737">
    <property type="term" value="C:cytoplasm"/>
    <property type="evidence" value="ECO:0007669"/>
    <property type="project" value="UniProtKB-SubCell"/>
</dbReference>
<dbReference type="GO" id="GO:0052657">
    <property type="term" value="F:guanine phosphoribosyltransferase activity"/>
    <property type="evidence" value="ECO:0007669"/>
    <property type="project" value="RHEA"/>
</dbReference>
<dbReference type="GO" id="GO:0004422">
    <property type="term" value="F:hypoxanthine phosphoribosyltransferase activity"/>
    <property type="evidence" value="ECO:0007669"/>
    <property type="project" value="UniProtKB-UniRule"/>
</dbReference>
<dbReference type="GO" id="GO:0032264">
    <property type="term" value="P:IMP salvage"/>
    <property type="evidence" value="ECO:0007669"/>
    <property type="project" value="UniProtKB-UniRule"/>
</dbReference>
<dbReference type="GO" id="GO:0006166">
    <property type="term" value="P:purine ribonucleoside salvage"/>
    <property type="evidence" value="ECO:0007669"/>
    <property type="project" value="UniProtKB-KW"/>
</dbReference>
<dbReference type="CDD" id="cd06223">
    <property type="entry name" value="PRTases_typeI"/>
    <property type="match status" value="1"/>
</dbReference>
<dbReference type="Gene3D" id="3.40.50.2020">
    <property type="match status" value="1"/>
</dbReference>
<dbReference type="HAMAP" id="MF_01467">
    <property type="entry name" value="Hypx_phosphoribosyltr"/>
    <property type="match status" value="1"/>
</dbReference>
<dbReference type="InterPro" id="IPR026597">
    <property type="entry name" value="HGPRTase-like"/>
</dbReference>
<dbReference type="InterPro" id="IPR000836">
    <property type="entry name" value="PRibTrfase_dom"/>
</dbReference>
<dbReference type="InterPro" id="IPR029057">
    <property type="entry name" value="PRTase-like"/>
</dbReference>
<dbReference type="InterPro" id="IPR050118">
    <property type="entry name" value="Pur/Pyrimidine_PRTase"/>
</dbReference>
<dbReference type="NCBIfam" id="NF040646">
    <property type="entry name" value="HPT_Archaea"/>
    <property type="match status" value="1"/>
</dbReference>
<dbReference type="NCBIfam" id="NF002635">
    <property type="entry name" value="PRK02304.1-4"/>
    <property type="match status" value="1"/>
</dbReference>
<dbReference type="PANTHER" id="PTHR43864">
    <property type="entry name" value="HYPOXANTHINE/GUANINE PHOSPHORIBOSYLTRANSFERASE"/>
    <property type="match status" value="1"/>
</dbReference>
<dbReference type="PANTHER" id="PTHR43864:SF1">
    <property type="entry name" value="XANTHINE PHOSPHORIBOSYLTRANSFERASE"/>
    <property type="match status" value="1"/>
</dbReference>
<dbReference type="Pfam" id="PF00156">
    <property type="entry name" value="Pribosyltran"/>
    <property type="match status" value="1"/>
</dbReference>
<dbReference type="SUPFAM" id="SSF53271">
    <property type="entry name" value="PRTase-like"/>
    <property type="match status" value="1"/>
</dbReference>
<dbReference type="PROSITE" id="PS00103">
    <property type="entry name" value="PUR_PYR_PR_TRANSFER"/>
    <property type="match status" value="1"/>
</dbReference>